<proteinExistence type="predicted"/>
<accession>P0C6K5</accession>
<sequence length="27" mass="3009">MQLFHLCLIISCSCPTVQASKLCLGWL</sequence>
<protein>
    <recommendedName>
        <fullName>Truncated HBeAg protein</fullName>
    </recommendedName>
</protein>
<organism>
    <name type="scientific">Hepatitis B virus genotype C subtype ayw (isolate Australia/AustRC/1992)</name>
    <name type="common">HBV-C</name>
    <dbReference type="NCBI Taxonomy" id="489471"/>
    <lineage>
        <taxon>Viruses</taxon>
        <taxon>Riboviria</taxon>
        <taxon>Pararnavirae</taxon>
        <taxon>Artverviricota</taxon>
        <taxon>Revtraviricetes</taxon>
        <taxon>Blubervirales</taxon>
        <taxon>Hepadnaviridae</taxon>
        <taxon>Orthohepadnavirus</taxon>
        <taxon>Hepatitis B virus</taxon>
        <taxon>hepatitis B virus genotype C</taxon>
    </lineage>
</organism>
<dbReference type="EMBL" id="AB048704">
    <property type="status" value="NOT_ANNOTATED_CDS"/>
    <property type="molecule type" value="Genomic_DNA"/>
</dbReference>
<dbReference type="Proteomes" id="UP000007927">
    <property type="component" value="Genome"/>
</dbReference>
<dbReference type="GO" id="GO:0005198">
    <property type="term" value="F:structural molecule activity"/>
    <property type="evidence" value="ECO:0007669"/>
    <property type="project" value="InterPro"/>
</dbReference>
<dbReference type="InterPro" id="IPR013195">
    <property type="entry name" value="Hepatitis_B_virus_capsid_N"/>
</dbReference>
<dbReference type="Pfam" id="PF08290">
    <property type="entry name" value="Hep_core_N"/>
    <property type="match status" value="1"/>
</dbReference>
<gene>
    <name type="primary">C</name>
</gene>
<name>HBEAG_HBVC9</name>
<organismHost>
    <name type="scientific">Homo sapiens</name>
    <name type="common">Human</name>
    <dbReference type="NCBI Taxonomy" id="9606"/>
</organismHost>
<organismHost>
    <name type="scientific">Pan troglodytes</name>
    <name type="common">Chimpanzee</name>
    <dbReference type="NCBI Taxonomy" id="9598"/>
</organismHost>
<keyword id="KW-0024">Alternative initiation</keyword>
<reference key="1">
    <citation type="journal article" date="2001" name="J. Gen. Virol.">
        <title>A novel variant genotype C of hepatitis B virus identified in isolates from Australian Aborigines: complete genome sequence and phylogenetic relatedness.</title>
        <authorList>
            <person name="Sugauchi F."/>
            <person name="Mizokami M."/>
            <person name="Orito E."/>
            <person name="Ohno T."/>
            <person name="Kato H."/>
            <person name="Suzuki S."/>
            <person name="Kimura Y."/>
            <person name="Ueda R."/>
            <person name="Butterworth L.A."/>
            <person name="Cooksley W.G."/>
        </authorList>
    </citation>
    <scope>NUCLEOTIDE SEQUENCE [GENOMIC DNA]</scope>
</reference>
<feature type="chain" id="PRO_0000324722" description="Truncated HBeAg protein">
    <location>
        <begin position="1"/>
        <end position="27"/>
    </location>
</feature>
<comment type="alternative products">
    <event type="alternative initiation"/>
    <isoform>
        <id>P0C6K5-1</id>
        <name>External core antigen</name>
        <sequence type="displayed"/>
    </isoform>
    <isoform>
        <id>P0C6H8-1</id>
        <name>Capsid protein</name>
        <sequence type="external"/>
    </isoform>
</comment>
<comment type="miscellaneous">
    <text>This virus has been isolated from patient with fulminant hepatitis. A genomic mutation in 1896 creates a stop codon at position 28 of HBeAg, without affecting capsid open reading frame. The HBeAg negative variants of HBV are associated with fulminant hepatitis, but can also be found in patients with persistent infection and chronic hepatitis.</text>
</comment>